<dbReference type="EC" id="3.6.5.-" evidence="1"/>
<dbReference type="EMBL" id="AM920689">
    <property type="protein sequence ID" value="CAP52552.1"/>
    <property type="molecule type" value="Genomic_DNA"/>
</dbReference>
<dbReference type="SMR" id="B0RY32"/>
<dbReference type="KEGG" id="xca:xcc-b100_3187"/>
<dbReference type="HOGENOM" id="CLU_011747_2_0_6"/>
<dbReference type="Proteomes" id="UP000001188">
    <property type="component" value="Chromosome"/>
</dbReference>
<dbReference type="GO" id="GO:0005737">
    <property type="term" value="C:cytoplasm"/>
    <property type="evidence" value="ECO:0007669"/>
    <property type="project" value="UniProtKB-SubCell"/>
</dbReference>
<dbReference type="GO" id="GO:0005525">
    <property type="term" value="F:GTP binding"/>
    <property type="evidence" value="ECO:0007669"/>
    <property type="project" value="UniProtKB-UniRule"/>
</dbReference>
<dbReference type="GO" id="GO:0003924">
    <property type="term" value="F:GTPase activity"/>
    <property type="evidence" value="ECO:0007669"/>
    <property type="project" value="UniProtKB-UniRule"/>
</dbReference>
<dbReference type="GO" id="GO:0000287">
    <property type="term" value="F:magnesium ion binding"/>
    <property type="evidence" value="ECO:0007669"/>
    <property type="project" value="InterPro"/>
</dbReference>
<dbReference type="GO" id="GO:0042254">
    <property type="term" value="P:ribosome biogenesis"/>
    <property type="evidence" value="ECO:0007669"/>
    <property type="project" value="UniProtKB-UniRule"/>
</dbReference>
<dbReference type="CDD" id="cd01898">
    <property type="entry name" value="Obg"/>
    <property type="match status" value="1"/>
</dbReference>
<dbReference type="FunFam" id="2.70.210.12:FF:000001">
    <property type="entry name" value="GTPase Obg"/>
    <property type="match status" value="1"/>
</dbReference>
<dbReference type="Gene3D" id="2.70.210.12">
    <property type="entry name" value="GTP1/OBG domain"/>
    <property type="match status" value="1"/>
</dbReference>
<dbReference type="Gene3D" id="3.40.50.300">
    <property type="entry name" value="P-loop containing nucleotide triphosphate hydrolases"/>
    <property type="match status" value="1"/>
</dbReference>
<dbReference type="HAMAP" id="MF_01454">
    <property type="entry name" value="GTPase_Obg"/>
    <property type="match status" value="1"/>
</dbReference>
<dbReference type="InterPro" id="IPR031167">
    <property type="entry name" value="G_OBG"/>
</dbReference>
<dbReference type="InterPro" id="IPR006073">
    <property type="entry name" value="GTP-bd"/>
</dbReference>
<dbReference type="InterPro" id="IPR014100">
    <property type="entry name" value="GTP-bd_Obg/CgtA"/>
</dbReference>
<dbReference type="InterPro" id="IPR006074">
    <property type="entry name" value="GTP1-OBG_CS"/>
</dbReference>
<dbReference type="InterPro" id="IPR006169">
    <property type="entry name" value="GTP1_OBG_dom"/>
</dbReference>
<dbReference type="InterPro" id="IPR036726">
    <property type="entry name" value="GTP1_OBG_dom_sf"/>
</dbReference>
<dbReference type="InterPro" id="IPR045086">
    <property type="entry name" value="OBG_GTPase"/>
</dbReference>
<dbReference type="InterPro" id="IPR027417">
    <property type="entry name" value="P-loop_NTPase"/>
</dbReference>
<dbReference type="NCBIfam" id="TIGR02729">
    <property type="entry name" value="Obg_CgtA"/>
    <property type="match status" value="1"/>
</dbReference>
<dbReference type="NCBIfam" id="NF008955">
    <property type="entry name" value="PRK12297.1"/>
    <property type="match status" value="1"/>
</dbReference>
<dbReference type="NCBIfam" id="NF008956">
    <property type="entry name" value="PRK12299.1"/>
    <property type="match status" value="1"/>
</dbReference>
<dbReference type="PANTHER" id="PTHR11702">
    <property type="entry name" value="DEVELOPMENTALLY REGULATED GTP-BINDING PROTEIN-RELATED"/>
    <property type="match status" value="1"/>
</dbReference>
<dbReference type="PANTHER" id="PTHR11702:SF31">
    <property type="entry name" value="MITOCHONDRIAL RIBOSOME-ASSOCIATED GTPASE 2"/>
    <property type="match status" value="1"/>
</dbReference>
<dbReference type="Pfam" id="PF01018">
    <property type="entry name" value="GTP1_OBG"/>
    <property type="match status" value="1"/>
</dbReference>
<dbReference type="Pfam" id="PF01926">
    <property type="entry name" value="MMR_HSR1"/>
    <property type="match status" value="1"/>
</dbReference>
<dbReference type="PIRSF" id="PIRSF002401">
    <property type="entry name" value="GTP_bd_Obg/CgtA"/>
    <property type="match status" value="1"/>
</dbReference>
<dbReference type="PRINTS" id="PR00326">
    <property type="entry name" value="GTP1OBG"/>
</dbReference>
<dbReference type="SUPFAM" id="SSF82051">
    <property type="entry name" value="Obg GTP-binding protein N-terminal domain"/>
    <property type="match status" value="1"/>
</dbReference>
<dbReference type="SUPFAM" id="SSF52540">
    <property type="entry name" value="P-loop containing nucleoside triphosphate hydrolases"/>
    <property type="match status" value="1"/>
</dbReference>
<dbReference type="PROSITE" id="PS51710">
    <property type="entry name" value="G_OBG"/>
    <property type="match status" value="1"/>
</dbReference>
<dbReference type="PROSITE" id="PS00905">
    <property type="entry name" value="GTP1_OBG"/>
    <property type="match status" value="1"/>
</dbReference>
<dbReference type="PROSITE" id="PS51883">
    <property type="entry name" value="OBG"/>
    <property type="match status" value="1"/>
</dbReference>
<reference key="1">
    <citation type="journal article" date="2008" name="J. Biotechnol.">
        <title>The genome of Xanthomonas campestris pv. campestris B100 and its use for the reconstruction of metabolic pathways involved in xanthan biosynthesis.</title>
        <authorList>
            <person name="Vorhoelter F.-J."/>
            <person name="Schneiker S."/>
            <person name="Goesmann A."/>
            <person name="Krause L."/>
            <person name="Bekel T."/>
            <person name="Kaiser O."/>
            <person name="Linke B."/>
            <person name="Patschkowski T."/>
            <person name="Rueckert C."/>
            <person name="Schmid J."/>
            <person name="Sidhu V.K."/>
            <person name="Sieber V."/>
            <person name="Tauch A."/>
            <person name="Watt S.A."/>
            <person name="Weisshaar B."/>
            <person name="Becker A."/>
            <person name="Niehaus K."/>
            <person name="Puehler A."/>
        </authorList>
    </citation>
    <scope>NUCLEOTIDE SEQUENCE [LARGE SCALE GENOMIC DNA]</scope>
    <source>
        <strain>B100</strain>
    </source>
</reference>
<evidence type="ECO:0000255" key="1">
    <source>
        <dbReference type="HAMAP-Rule" id="MF_01454"/>
    </source>
</evidence>
<evidence type="ECO:0000255" key="2">
    <source>
        <dbReference type="PROSITE-ProRule" id="PRU01231"/>
    </source>
</evidence>
<proteinExistence type="inferred from homology"/>
<accession>B0RY32</accession>
<gene>
    <name evidence="1" type="primary">obg</name>
    <name type="ordered locus">xcc-b100_3187</name>
</gene>
<feature type="chain" id="PRO_0000386396" description="GTPase Obg">
    <location>
        <begin position="1"/>
        <end position="350"/>
    </location>
</feature>
<feature type="domain" description="Obg" evidence="2">
    <location>
        <begin position="1"/>
        <end position="159"/>
    </location>
</feature>
<feature type="domain" description="OBG-type G" evidence="1">
    <location>
        <begin position="160"/>
        <end position="337"/>
    </location>
</feature>
<feature type="binding site" evidence="1">
    <location>
        <begin position="166"/>
        <end position="173"/>
    </location>
    <ligand>
        <name>GTP</name>
        <dbReference type="ChEBI" id="CHEBI:37565"/>
    </ligand>
</feature>
<feature type="binding site" evidence="1">
    <location>
        <position position="173"/>
    </location>
    <ligand>
        <name>Mg(2+)</name>
        <dbReference type="ChEBI" id="CHEBI:18420"/>
    </ligand>
</feature>
<feature type="binding site" evidence="1">
    <location>
        <begin position="191"/>
        <end position="195"/>
    </location>
    <ligand>
        <name>GTP</name>
        <dbReference type="ChEBI" id="CHEBI:37565"/>
    </ligand>
</feature>
<feature type="binding site" evidence="1">
    <location>
        <position position="193"/>
    </location>
    <ligand>
        <name>Mg(2+)</name>
        <dbReference type="ChEBI" id="CHEBI:18420"/>
    </ligand>
</feature>
<feature type="binding site" evidence="1">
    <location>
        <begin position="213"/>
        <end position="216"/>
    </location>
    <ligand>
        <name>GTP</name>
        <dbReference type="ChEBI" id="CHEBI:37565"/>
    </ligand>
</feature>
<feature type="binding site" evidence="1">
    <location>
        <begin position="287"/>
        <end position="290"/>
    </location>
    <ligand>
        <name>GTP</name>
        <dbReference type="ChEBI" id="CHEBI:37565"/>
    </ligand>
</feature>
<feature type="binding site" evidence="1">
    <location>
        <begin position="318"/>
        <end position="320"/>
    </location>
    <ligand>
        <name>GTP</name>
        <dbReference type="ChEBI" id="CHEBI:37565"/>
    </ligand>
</feature>
<keyword id="KW-0963">Cytoplasm</keyword>
<keyword id="KW-0342">GTP-binding</keyword>
<keyword id="KW-0378">Hydrolase</keyword>
<keyword id="KW-0460">Magnesium</keyword>
<keyword id="KW-0479">Metal-binding</keyword>
<keyword id="KW-0547">Nucleotide-binding</keyword>
<organism>
    <name type="scientific">Xanthomonas campestris pv. campestris (strain B100)</name>
    <dbReference type="NCBI Taxonomy" id="509169"/>
    <lineage>
        <taxon>Bacteria</taxon>
        <taxon>Pseudomonadati</taxon>
        <taxon>Pseudomonadota</taxon>
        <taxon>Gammaproteobacteria</taxon>
        <taxon>Lysobacterales</taxon>
        <taxon>Lysobacteraceae</taxon>
        <taxon>Xanthomonas</taxon>
    </lineage>
</organism>
<protein>
    <recommendedName>
        <fullName evidence="1">GTPase Obg</fullName>
        <ecNumber evidence="1">3.6.5.-</ecNumber>
    </recommendedName>
    <alternativeName>
        <fullName evidence="1">GTP-binding protein Obg</fullName>
    </alternativeName>
</protein>
<sequence length="350" mass="37698">MKLVDEAEILVTAGNGGNGCVGFRREKFIPLGGPDGGDGGNGGSVWIVADENVNTLVDFRHERAFKAQRGENGMGRQAYGKGGEDRVIVVPVGTVVMNVQTDEIIGDMTQHGDRLLVAKGGKGGLGNMHFKSSVNRAPRQSTTGEEGEERLLKLELKLLADVGLLGFPNAGKSTLIRAVSAATPKVADYPFTTLYPNLGVVSVEAYRSFVIADVPGLIEGAADGAGLGTQFLRHLQRTRLLLHLVDISPMDGGVDGVSPVDQVRTIERELERHDPALLEKPRWLVLNKADLMFPEEAQAAAEAIVAELGWTAPWYLVSALGRDGTFPIMKDVMAFFDRQREDELEARNAG</sequence>
<comment type="function">
    <text evidence="1">An essential GTPase which binds GTP, GDP and possibly (p)ppGpp with moderate affinity, with high nucleotide exchange rates and a fairly low GTP hydrolysis rate. Plays a role in control of the cell cycle, stress response, ribosome biogenesis and in those bacteria that undergo differentiation, in morphogenesis control.</text>
</comment>
<comment type="cofactor">
    <cofactor evidence="1">
        <name>Mg(2+)</name>
        <dbReference type="ChEBI" id="CHEBI:18420"/>
    </cofactor>
</comment>
<comment type="subunit">
    <text evidence="1">Monomer.</text>
</comment>
<comment type="subcellular location">
    <subcellularLocation>
        <location evidence="1">Cytoplasm</location>
    </subcellularLocation>
</comment>
<comment type="similarity">
    <text evidence="1">Belongs to the TRAFAC class OBG-HflX-like GTPase superfamily. OBG GTPase family.</text>
</comment>
<name>OBG_XANCB</name>